<accession>D5ARY8</accession>
<accession>P18607</accession>
<accession>Q52692</accession>
<accession>Q52717</accession>
<protein>
    <recommendedName>
        <fullName>Type A flavoprotein fprA</fullName>
        <ecNumber>1.-.-.-</ecNumber>
    </recommendedName>
    <alternativeName>
        <fullName>FMN protein fprA</fullName>
    </alternativeName>
    <alternativeName>
        <fullName>Flavoprotein A</fullName>
    </alternativeName>
</protein>
<sequence length="435" mass="47914">MSVPPFTIRPAAPRLDGPTGPVAVAPGVHWVGALDPGLRNFDVILKTANGTTYNAYAVRGSEGVAVIDTVKAEFAGDFFARLEAVARYDEIRLIVLNHLEPDHTGAVPELLRRAPQAQVRLSPRGLPMLRALLKDDFERYDIKGVTTGQSVSLGDRDLQFFTTPFVHWPDTQCTWLAAERVLFTCDLFGSHYCDGRLFNDLVGDFRFSFEYYFDRIMRPFRSFVAQALDLIEPLDFGIIAPAHGPILRSHPRDYLTHTRRLISSRLAAETGSEKTLLIFYVSAYGATAQLAQAIHDGAAESPDVRVSLFDLEGGEITPFLDLIEEADGIALGTPTINGDAVRTIWEMLAALVDIETRGKLGAAFGSYGWSGEAVRLVETRLQGLKMRLPEPGLRVKLHPSAAELEEGRAFGRRLADHLTGRAAPREVDFAEIAAR</sequence>
<proteinExistence type="inferred from homology"/>
<evidence type="ECO:0000250" key="1"/>
<evidence type="ECO:0000255" key="2">
    <source>
        <dbReference type="PROSITE-ProRule" id="PRU00088"/>
    </source>
</evidence>
<evidence type="ECO:0000305" key="3"/>
<name>FPRA_RHOCB</name>
<feature type="chain" id="PRO_0000410438" description="Type A flavoprotein fprA">
    <location>
        <begin position="1"/>
        <end position="435"/>
    </location>
</feature>
<feature type="domain" description="Flavodoxin-like" evidence="2">
    <location>
        <begin position="276"/>
        <end position="415"/>
    </location>
</feature>
<feature type="region of interest" description="Zinc metallo-hydrolase">
    <location>
        <begin position="48"/>
        <end position="228"/>
    </location>
</feature>
<feature type="binding site" evidence="1">
    <location>
        <position position="98"/>
    </location>
    <ligand>
        <name>Fe cation</name>
        <dbReference type="ChEBI" id="CHEBI:24875"/>
        <label>1</label>
    </ligand>
</feature>
<feature type="binding site" evidence="1">
    <location>
        <position position="100"/>
    </location>
    <ligand>
        <name>Fe cation</name>
        <dbReference type="ChEBI" id="CHEBI:24875"/>
        <label>1</label>
    </ligand>
</feature>
<feature type="binding site" evidence="1">
    <location>
        <position position="102"/>
    </location>
    <ligand>
        <name>Fe cation</name>
        <dbReference type="ChEBI" id="CHEBI:24875"/>
        <label>2</label>
    </ligand>
</feature>
<feature type="binding site" evidence="1">
    <location>
        <position position="167"/>
    </location>
    <ligand>
        <name>Fe cation</name>
        <dbReference type="ChEBI" id="CHEBI:24875"/>
        <label>1</label>
    </ligand>
</feature>
<feature type="binding site" evidence="1">
    <location>
        <position position="186"/>
    </location>
    <ligand>
        <name>Fe cation</name>
        <dbReference type="ChEBI" id="CHEBI:24875"/>
        <label>1</label>
    </ligand>
</feature>
<feature type="binding site" evidence="1">
    <location>
        <position position="186"/>
    </location>
    <ligand>
        <name>Fe cation</name>
        <dbReference type="ChEBI" id="CHEBI:24875"/>
        <label>2</label>
    </ligand>
</feature>
<feature type="binding site" evidence="1">
    <location>
        <position position="243"/>
    </location>
    <ligand>
        <name>Fe cation</name>
        <dbReference type="ChEBI" id="CHEBI:24875"/>
        <label>2</label>
    </ligand>
</feature>
<feature type="sequence conflict" description="In Ref. 1; BAA02789." evidence="3" ref="1">
    <original>E</original>
    <variation>K</variation>
    <location>
        <position position="405"/>
    </location>
</feature>
<gene>
    <name type="primary">fprA</name>
    <name type="synonym">norV</name>
    <name type="ordered locus">RCAP_rcc03286</name>
</gene>
<comment type="function">
    <text evidence="3">Low-potential electron donor to a number of redox enzymes.</text>
</comment>
<comment type="cofactor">
    <cofactor>
        <name>FMN</name>
        <dbReference type="ChEBI" id="CHEBI:58210"/>
    </cofactor>
    <text>Binds 1 FMN per monomer.</text>
</comment>
<comment type="cofactor">
    <cofactor>
        <name>Fe cation</name>
        <dbReference type="ChEBI" id="CHEBI:24875"/>
    </cofactor>
    <text>Binds 2 iron ions per subunit.</text>
</comment>
<comment type="subunit">
    <text evidence="3">Homodimer.</text>
</comment>
<comment type="similarity">
    <text evidence="3">In the N-terminal section; belongs to the zinc metallo-hydrolase group 3 family.</text>
</comment>
<keyword id="KW-0249">Electron transport</keyword>
<keyword id="KW-0285">Flavoprotein</keyword>
<keyword id="KW-0288">FMN</keyword>
<keyword id="KW-0408">Iron</keyword>
<keyword id="KW-0479">Metal-binding</keyword>
<keyword id="KW-0560">Oxidoreductase</keyword>
<keyword id="KW-1185">Reference proteome</keyword>
<keyword id="KW-0813">Transport</keyword>
<organism>
    <name type="scientific">Rhodobacter capsulatus (strain ATCC BAA-309 / NBRC 16581 / SB1003)</name>
    <dbReference type="NCBI Taxonomy" id="272942"/>
    <lineage>
        <taxon>Bacteria</taxon>
        <taxon>Pseudomonadati</taxon>
        <taxon>Pseudomonadota</taxon>
        <taxon>Alphaproteobacteria</taxon>
        <taxon>Rhodobacterales</taxon>
        <taxon>Rhodobacter group</taxon>
        <taxon>Rhodobacter</taxon>
    </lineage>
</organism>
<reference key="1">
    <citation type="journal article" date="1993" name="Plant Cell Physiol.">
        <title>Nucleotide sequence and genetic analysis of the region essential for functional expression of the gene for ferredoxin I, fdxN, in Rhodobacter capsulatus: sharing of one upstream activator sequence in opposite directions by two operons related to nitrogen fixation.</title>
        <authorList>
            <person name="Saeki K."/>
            <person name="Tokuda K."/>
            <person name="Fujiwara T."/>
            <person name="Matsubara H."/>
        </authorList>
    </citation>
    <scope>NUCLEOTIDE SEQUENCE [GENOMIC DNA]</scope>
    <source>
        <strain>ATCC BAA-309 / NBRC 16581 / SB1003</strain>
    </source>
</reference>
<reference key="2">
    <citation type="journal article" date="2010" name="J. Bacteriol.">
        <title>Complete genome sequence of the photosynthetic purple nonsulfur bacterium Rhodobacter capsulatus SB 1003.</title>
        <authorList>
            <person name="Strnad H."/>
            <person name="Lapidus A."/>
            <person name="Paces J."/>
            <person name="Ulbrich P."/>
            <person name="Vlcek C."/>
            <person name="Paces V."/>
            <person name="Haselkorn R."/>
        </authorList>
    </citation>
    <scope>NUCLEOTIDE SEQUENCE [LARGE SCALE GENOMIC DNA]</scope>
    <source>
        <strain>ATCC BAA-309 / NBRC 16581 / SB1003</strain>
    </source>
</reference>
<dbReference type="EC" id="1.-.-.-"/>
<dbReference type="EMBL" id="D13625">
    <property type="protein sequence ID" value="BAA02789.2"/>
    <property type="molecule type" value="Genomic_DNA"/>
</dbReference>
<dbReference type="EMBL" id="CP001312">
    <property type="protein sequence ID" value="ADE87010.1"/>
    <property type="molecule type" value="Genomic_DNA"/>
</dbReference>
<dbReference type="RefSeq" id="WP_013068982.1">
    <property type="nucleotide sequence ID" value="NC_014034.1"/>
</dbReference>
<dbReference type="SMR" id="D5ARY8"/>
<dbReference type="STRING" id="272942.RCAP_rcc03286"/>
<dbReference type="GeneID" id="31492066"/>
<dbReference type="KEGG" id="rcp:RCAP_rcc03286"/>
<dbReference type="eggNOG" id="COG0426">
    <property type="taxonomic scope" value="Bacteria"/>
</dbReference>
<dbReference type="HOGENOM" id="CLU_017490_2_1_5"/>
<dbReference type="OrthoDB" id="9800607at2"/>
<dbReference type="Proteomes" id="UP000002361">
    <property type="component" value="Chromosome"/>
</dbReference>
<dbReference type="GO" id="GO:0009055">
    <property type="term" value="F:electron transfer activity"/>
    <property type="evidence" value="ECO:0007669"/>
    <property type="project" value="InterPro"/>
</dbReference>
<dbReference type="GO" id="GO:0010181">
    <property type="term" value="F:FMN binding"/>
    <property type="evidence" value="ECO:0007669"/>
    <property type="project" value="InterPro"/>
</dbReference>
<dbReference type="GO" id="GO:0046872">
    <property type="term" value="F:metal ion binding"/>
    <property type="evidence" value="ECO:0007669"/>
    <property type="project" value="UniProtKB-KW"/>
</dbReference>
<dbReference type="GO" id="GO:0016491">
    <property type="term" value="F:oxidoreductase activity"/>
    <property type="evidence" value="ECO:0007669"/>
    <property type="project" value="UniProtKB-KW"/>
</dbReference>
<dbReference type="CDD" id="cd07709">
    <property type="entry name" value="flavodiiron_proteins_MBL-fold"/>
    <property type="match status" value="1"/>
</dbReference>
<dbReference type="Gene3D" id="3.40.50.360">
    <property type="match status" value="1"/>
</dbReference>
<dbReference type="Gene3D" id="3.60.15.10">
    <property type="entry name" value="Ribonuclease Z/Hydroxyacylglutathione hydrolase-like"/>
    <property type="match status" value="1"/>
</dbReference>
<dbReference type="InterPro" id="IPR008254">
    <property type="entry name" value="Flavodoxin/NO_synth"/>
</dbReference>
<dbReference type="InterPro" id="IPR001226">
    <property type="entry name" value="Flavodoxin_CS"/>
</dbReference>
<dbReference type="InterPro" id="IPR029039">
    <property type="entry name" value="Flavoprotein-like_sf"/>
</dbReference>
<dbReference type="InterPro" id="IPR001279">
    <property type="entry name" value="Metallo-B-lactamas"/>
</dbReference>
<dbReference type="InterPro" id="IPR051285">
    <property type="entry name" value="NADH_oxidoreductase_modular"/>
</dbReference>
<dbReference type="InterPro" id="IPR045761">
    <property type="entry name" value="ODP_dom"/>
</dbReference>
<dbReference type="InterPro" id="IPR036866">
    <property type="entry name" value="RibonucZ/Hydroxyglut_hydro"/>
</dbReference>
<dbReference type="InterPro" id="IPR016440">
    <property type="entry name" value="Rubredoxin-O_OxRdtase"/>
</dbReference>
<dbReference type="PANTHER" id="PTHR32145">
    <property type="entry name" value="DIFLAVIN FLAVOPROTEIN A 2-RELATED"/>
    <property type="match status" value="1"/>
</dbReference>
<dbReference type="PANTHER" id="PTHR32145:SF11">
    <property type="entry name" value="DIFLAVIN FLAVOPROTEIN A 2-RELATED"/>
    <property type="match status" value="1"/>
</dbReference>
<dbReference type="Pfam" id="PF00258">
    <property type="entry name" value="Flavodoxin_1"/>
    <property type="match status" value="1"/>
</dbReference>
<dbReference type="Pfam" id="PF19583">
    <property type="entry name" value="ODP"/>
    <property type="match status" value="1"/>
</dbReference>
<dbReference type="PIRSF" id="PIRSF005243">
    <property type="entry name" value="ROO"/>
    <property type="match status" value="1"/>
</dbReference>
<dbReference type="SMART" id="SM00849">
    <property type="entry name" value="Lactamase_B"/>
    <property type="match status" value="1"/>
</dbReference>
<dbReference type="SUPFAM" id="SSF52218">
    <property type="entry name" value="Flavoproteins"/>
    <property type="match status" value="1"/>
</dbReference>
<dbReference type="SUPFAM" id="SSF56281">
    <property type="entry name" value="Metallo-hydrolase/oxidoreductase"/>
    <property type="match status" value="1"/>
</dbReference>
<dbReference type="PROSITE" id="PS00201">
    <property type="entry name" value="FLAVODOXIN"/>
    <property type="match status" value="1"/>
</dbReference>
<dbReference type="PROSITE" id="PS50902">
    <property type="entry name" value="FLAVODOXIN_LIKE"/>
    <property type="match status" value="1"/>
</dbReference>